<reference evidence="9 10" key="1">
    <citation type="journal article" date="1998" name="Proc. Natl. Acad. Sci. U.S.A.">
        <title>Nitrilase and Fhit homologs are encoded as fusion proteins in Drosophila melanogaster and Caenorhabditis elegans.</title>
        <authorList>
            <person name="Pekarsky Y."/>
            <person name="Campiglio M."/>
            <person name="Siprashvili Z."/>
            <person name="Druck T."/>
            <person name="Sedkov Y."/>
            <person name="Tillib S."/>
            <person name="Draganescu A."/>
            <person name="Wermuth P."/>
            <person name="Rothman J.H."/>
            <person name="Huebner K."/>
            <person name="Buchberg A.M."/>
            <person name="Mazo A."/>
            <person name="Brenner C."/>
            <person name="Croce C.M."/>
        </authorList>
    </citation>
    <scope>NUCLEOTIDE SEQUENCE [MRNA]</scope>
    <scope>FUNCTION</scope>
    <scope>CATALYTIC ACTIVITY</scope>
    <scope>DEVELOPMENTAL STAGE</scope>
</reference>
<reference evidence="11" key="2">
    <citation type="journal article" date="2000" name="Science">
        <title>The genome sequence of Drosophila melanogaster.</title>
        <authorList>
            <person name="Adams M.D."/>
            <person name="Celniker S.E."/>
            <person name="Holt R.A."/>
            <person name="Evans C.A."/>
            <person name="Gocayne J.D."/>
            <person name="Amanatides P.G."/>
            <person name="Scherer S.E."/>
            <person name="Li P.W."/>
            <person name="Hoskins R.A."/>
            <person name="Galle R.F."/>
            <person name="George R.A."/>
            <person name="Lewis S.E."/>
            <person name="Richards S."/>
            <person name="Ashburner M."/>
            <person name="Henderson S.N."/>
            <person name="Sutton G.G."/>
            <person name="Wortman J.R."/>
            <person name="Yandell M.D."/>
            <person name="Zhang Q."/>
            <person name="Chen L.X."/>
            <person name="Brandon R.C."/>
            <person name="Rogers Y.-H.C."/>
            <person name="Blazej R.G."/>
            <person name="Champe M."/>
            <person name="Pfeiffer B.D."/>
            <person name="Wan K.H."/>
            <person name="Doyle C."/>
            <person name="Baxter E.G."/>
            <person name="Helt G."/>
            <person name="Nelson C.R."/>
            <person name="Miklos G.L.G."/>
            <person name="Abril J.F."/>
            <person name="Agbayani A."/>
            <person name="An H.-J."/>
            <person name="Andrews-Pfannkoch C."/>
            <person name="Baldwin D."/>
            <person name="Ballew R.M."/>
            <person name="Basu A."/>
            <person name="Baxendale J."/>
            <person name="Bayraktaroglu L."/>
            <person name="Beasley E.M."/>
            <person name="Beeson K.Y."/>
            <person name="Benos P.V."/>
            <person name="Berman B.P."/>
            <person name="Bhandari D."/>
            <person name="Bolshakov S."/>
            <person name="Borkova D."/>
            <person name="Botchan M.R."/>
            <person name="Bouck J."/>
            <person name="Brokstein P."/>
            <person name="Brottier P."/>
            <person name="Burtis K.C."/>
            <person name="Busam D.A."/>
            <person name="Butler H."/>
            <person name="Cadieu E."/>
            <person name="Center A."/>
            <person name="Chandra I."/>
            <person name="Cherry J.M."/>
            <person name="Cawley S."/>
            <person name="Dahlke C."/>
            <person name="Davenport L.B."/>
            <person name="Davies P."/>
            <person name="de Pablos B."/>
            <person name="Delcher A."/>
            <person name="Deng Z."/>
            <person name="Mays A.D."/>
            <person name="Dew I."/>
            <person name="Dietz S.M."/>
            <person name="Dodson K."/>
            <person name="Doup L.E."/>
            <person name="Downes M."/>
            <person name="Dugan-Rocha S."/>
            <person name="Dunkov B.C."/>
            <person name="Dunn P."/>
            <person name="Durbin K.J."/>
            <person name="Evangelista C.C."/>
            <person name="Ferraz C."/>
            <person name="Ferriera S."/>
            <person name="Fleischmann W."/>
            <person name="Fosler C."/>
            <person name="Gabrielian A.E."/>
            <person name="Garg N.S."/>
            <person name="Gelbart W.M."/>
            <person name="Glasser K."/>
            <person name="Glodek A."/>
            <person name="Gong F."/>
            <person name="Gorrell J.H."/>
            <person name="Gu Z."/>
            <person name="Guan P."/>
            <person name="Harris M."/>
            <person name="Harris N.L."/>
            <person name="Harvey D.A."/>
            <person name="Heiman T.J."/>
            <person name="Hernandez J.R."/>
            <person name="Houck J."/>
            <person name="Hostin D."/>
            <person name="Houston K.A."/>
            <person name="Howland T.J."/>
            <person name="Wei M.-H."/>
            <person name="Ibegwam C."/>
            <person name="Jalali M."/>
            <person name="Kalush F."/>
            <person name="Karpen G.H."/>
            <person name="Ke Z."/>
            <person name="Kennison J.A."/>
            <person name="Ketchum K.A."/>
            <person name="Kimmel B.E."/>
            <person name="Kodira C.D."/>
            <person name="Kraft C.L."/>
            <person name="Kravitz S."/>
            <person name="Kulp D."/>
            <person name="Lai Z."/>
            <person name="Lasko P."/>
            <person name="Lei Y."/>
            <person name="Levitsky A.A."/>
            <person name="Li J.H."/>
            <person name="Li Z."/>
            <person name="Liang Y."/>
            <person name="Lin X."/>
            <person name="Liu X."/>
            <person name="Mattei B."/>
            <person name="McIntosh T.C."/>
            <person name="McLeod M.P."/>
            <person name="McPherson D."/>
            <person name="Merkulov G."/>
            <person name="Milshina N.V."/>
            <person name="Mobarry C."/>
            <person name="Morris J."/>
            <person name="Moshrefi A."/>
            <person name="Mount S.M."/>
            <person name="Moy M."/>
            <person name="Murphy B."/>
            <person name="Murphy L."/>
            <person name="Muzny D.M."/>
            <person name="Nelson D.L."/>
            <person name="Nelson D.R."/>
            <person name="Nelson K.A."/>
            <person name="Nixon K."/>
            <person name="Nusskern D.R."/>
            <person name="Pacleb J.M."/>
            <person name="Palazzolo M."/>
            <person name="Pittman G.S."/>
            <person name="Pan S."/>
            <person name="Pollard J."/>
            <person name="Puri V."/>
            <person name="Reese M.G."/>
            <person name="Reinert K."/>
            <person name="Remington K."/>
            <person name="Saunders R.D.C."/>
            <person name="Scheeler F."/>
            <person name="Shen H."/>
            <person name="Shue B.C."/>
            <person name="Siden-Kiamos I."/>
            <person name="Simpson M."/>
            <person name="Skupski M.P."/>
            <person name="Smith T.J."/>
            <person name="Spier E."/>
            <person name="Spradling A.C."/>
            <person name="Stapleton M."/>
            <person name="Strong R."/>
            <person name="Sun E."/>
            <person name="Svirskas R."/>
            <person name="Tector C."/>
            <person name="Turner R."/>
            <person name="Venter E."/>
            <person name="Wang A.H."/>
            <person name="Wang X."/>
            <person name="Wang Z.-Y."/>
            <person name="Wassarman D.A."/>
            <person name="Weinstock G.M."/>
            <person name="Weissenbach J."/>
            <person name="Williams S.M."/>
            <person name="Woodage T."/>
            <person name="Worley K.C."/>
            <person name="Wu D."/>
            <person name="Yang S."/>
            <person name="Yao Q.A."/>
            <person name="Ye J."/>
            <person name="Yeh R.-F."/>
            <person name="Zaveri J.S."/>
            <person name="Zhan M."/>
            <person name="Zhang G."/>
            <person name="Zhao Q."/>
            <person name="Zheng L."/>
            <person name="Zheng X.H."/>
            <person name="Zhong F.N."/>
            <person name="Zhong W."/>
            <person name="Zhou X."/>
            <person name="Zhu S.C."/>
            <person name="Zhu X."/>
            <person name="Smith H.O."/>
            <person name="Gibbs R.A."/>
            <person name="Myers E.W."/>
            <person name="Rubin G.M."/>
            <person name="Venter J.C."/>
        </authorList>
    </citation>
    <scope>NUCLEOTIDE SEQUENCE [LARGE SCALE GENOMIC DNA]</scope>
    <source>
        <strain evidence="6">Berkeley</strain>
    </source>
</reference>
<reference key="3">
    <citation type="journal article" date="2002" name="Genome Biol.">
        <title>Annotation of the Drosophila melanogaster euchromatic genome: a systematic review.</title>
        <authorList>
            <person name="Misra S."/>
            <person name="Crosby M.A."/>
            <person name="Mungall C.J."/>
            <person name="Matthews B.B."/>
            <person name="Campbell K.S."/>
            <person name="Hradecky P."/>
            <person name="Huang Y."/>
            <person name="Kaminker J.S."/>
            <person name="Millburn G.H."/>
            <person name="Prochnik S.E."/>
            <person name="Smith C.D."/>
            <person name="Tupy J.L."/>
            <person name="Whitfield E.J."/>
            <person name="Bayraktaroglu L."/>
            <person name="Berman B.P."/>
            <person name="Bettencourt B.R."/>
            <person name="Celniker S.E."/>
            <person name="de Grey A.D.N.J."/>
            <person name="Drysdale R.A."/>
            <person name="Harris N.L."/>
            <person name="Richter J."/>
            <person name="Russo S."/>
            <person name="Schroeder A.J."/>
            <person name="Shu S.Q."/>
            <person name="Stapleton M."/>
            <person name="Yamada C."/>
            <person name="Ashburner M."/>
            <person name="Gelbart W.M."/>
            <person name="Rubin G.M."/>
            <person name="Lewis S.E."/>
        </authorList>
    </citation>
    <scope>GENOME REANNOTATION</scope>
    <source>
        <strain>Berkeley</strain>
    </source>
</reference>
<reference evidence="9 12" key="4">
    <citation type="journal article" date="2002" name="Genome Biol.">
        <title>A Drosophila full-length cDNA resource.</title>
        <authorList>
            <person name="Stapleton M."/>
            <person name="Carlson J.W."/>
            <person name="Brokstein P."/>
            <person name="Yu C."/>
            <person name="Champe M."/>
            <person name="George R.A."/>
            <person name="Guarin H."/>
            <person name="Kronmiller B."/>
            <person name="Pacleb J.M."/>
            <person name="Park S."/>
            <person name="Wan K.H."/>
            <person name="Rubin G.M."/>
            <person name="Celniker S.E."/>
        </authorList>
    </citation>
    <scope>NUCLEOTIDE SEQUENCE [LARGE SCALE MRNA]</scope>
    <source>
        <strain evidence="7">Berkeley</strain>
        <tissue evidence="12">Testis</tissue>
    </source>
</reference>
<keyword id="KW-0378">Hydrolase</keyword>
<keyword id="KW-0464">Manganese</keyword>
<keyword id="KW-0511">Multifunctional enzyme</keyword>
<keyword id="KW-0547">Nucleotide-binding</keyword>
<keyword id="KW-1185">Reference proteome</keyword>
<proteinExistence type="evidence at protein level"/>
<accession>O76464</accession>
<sequence length="460" mass="52232">MSTLVNTTRRSIVIAIHQQLRRMSVQKRKDQSATIAVGQMRSTSDKAANLSQVIELVDRAKSQNACMLFLPECCDFVGESRTQTIELSEGLDGELMAQYRELAKCNKIWISLGGVHERNDQKIFNAHVLLNEKGELAAVYRKLHMFDVTTKEVRLRESDTVTPGYCLERPVSTPVGQIGLQICYDLRFAEPAVLLRKLGANLLTYPSAFTYATGKAHWEILLRARAIETQCFVVAAAQIGWHNQKRQSWGHSMIVSPWGNVLADCSEQELDIGTAEVDLSVLQSLYQTMPCFEHRRNDIYALTAYNLRSKEPTQDRPFATNIVDKRTIFYESEHCFAFTNLRCVVKGHVLVSTKRVTPRLCGLDCAEMADMFTTVCLVQRLLEKIYQTTSATVTVQDGAQAGQTVPHVHFHIMPRRLGDFGHNDQIYVKLDERAEEKPPRTIEERIEEAQIYRKFLTDIS</sequence>
<evidence type="ECO:0000250" key="1">
    <source>
        <dbReference type="UniProtKB" id="O76463"/>
    </source>
</evidence>
<evidence type="ECO:0000250" key="2">
    <source>
        <dbReference type="UniProtKB" id="P49789"/>
    </source>
</evidence>
<evidence type="ECO:0000255" key="3"/>
<evidence type="ECO:0000255" key="4">
    <source>
        <dbReference type="PROSITE-ProRule" id="PRU00054"/>
    </source>
</evidence>
<evidence type="ECO:0000255" key="5">
    <source>
        <dbReference type="PROSITE-ProRule" id="PRU00464"/>
    </source>
</evidence>
<evidence type="ECO:0000269" key="6">
    <source>
    </source>
</evidence>
<evidence type="ECO:0000269" key="7">
    <source>
    </source>
</evidence>
<evidence type="ECO:0000269" key="8">
    <source>
    </source>
</evidence>
<evidence type="ECO:0000305" key="9"/>
<evidence type="ECO:0000312" key="10">
    <source>
        <dbReference type="EMBL" id="AAC39137.1"/>
    </source>
</evidence>
<evidence type="ECO:0000312" key="11">
    <source>
        <dbReference type="EMBL" id="AAF47347.1"/>
    </source>
</evidence>
<evidence type="ECO:0000312" key="12">
    <source>
        <dbReference type="EMBL" id="AAL89959.1"/>
    </source>
</evidence>
<gene>
    <name evidence="11" type="primary">NitFhit</name>
    <name type="ORF">CG7067</name>
</gene>
<feature type="chain" id="PRO_0000109792" description="Nitrilase and fragile histidine triad fusion protein NitFhit">
    <location>
        <begin position="1"/>
        <end position="460"/>
    </location>
</feature>
<feature type="domain" description="CN hydrolase" evidence="4">
    <location>
        <begin position="33"/>
        <end position="279"/>
    </location>
</feature>
<feature type="domain" description="HIT" evidence="5">
    <location>
        <begin position="315"/>
        <end position="422"/>
    </location>
</feature>
<feature type="short sequence motif" description="Histidine triad motif">
    <location>
        <begin position="407"/>
        <end position="411"/>
    </location>
</feature>
<feature type="active site" evidence="4">
    <location>
        <position position="72"/>
    </location>
</feature>
<feature type="active site" evidence="4">
    <location>
        <position position="142"/>
    </location>
</feature>
<feature type="active site" evidence="4">
    <location>
        <position position="183"/>
    </location>
</feature>
<feature type="active site" description="Tele-AMP-histidine intermediate" evidence="2 4">
    <location>
        <position position="409"/>
    </location>
</feature>
<protein>
    <recommendedName>
        <fullName>Nitrilase and fragile histidine triad fusion protein NitFhit</fullName>
    </recommendedName>
    <alternativeName>
        <fullName>NFT-1 protein</fullName>
    </alternativeName>
    <domain>
        <recommendedName>
            <fullName>Bis(5'-adenosyl)-triphosphatase</fullName>
            <ecNumber>3.6.1.29</ecNumber>
        </recommendedName>
        <alternativeName>
            <fullName>Diadenosine 5',5'''-P1,P3-triphosphate hydrolase</fullName>
            <shortName>AP3A hydrolase</shortName>
            <shortName>AP3Aase</shortName>
            <shortName>Dinucleosidetriphosphatase</shortName>
        </alternativeName>
    </domain>
    <domain>
        <recommendedName>
            <fullName>Nitrilase homolog</fullName>
            <ecNumber>3.5.-.-</ecNumber>
        </recommendedName>
    </domain>
</protein>
<dbReference type="EC" id="3.6.1.29"/>
<dbReference type="EC" id="3.5.-.-"/>
<dbReference type="EMBL" id="AF069989">
    <property type="protein sequence ID" value="AAC39137.1"/>
    <property type="molecule type" value="mRNA"/>
</dbReference>
<dbReference type="EMBL" id="AE014296">
    <property type="protein sequence ID" value="AAF47347.1"/>
    <property type="molecule type" value="Genomic_DNA"/>
</dbReference>
<dbReference type="EMBL" id="AY089221">
    <property type="protein sequence ID" value="AAL89959.1"/>
    <property type="molecule type" value="mRNA"/>
</dbReference>
<dbReference type="RefSeq" id="NP_525122.1">
    <property type="nucleotide sequence ID" value="NM_080383.4"/>
</dbReference>
<dbReference type="SMR" id="O76464"/>
<dbReference type="BioGRID" id="63593">
    <property type="interactions" value="4"/>
</dbReference>
<dbReference type="FunCoup" id="O76464">
    <property type="interactions" value="644"/>
</dbReference>
<dbReference type="IntAct" id="O76464">
    <property type="interactions" value="1"/>
</dbReference>
<dbReference type="STRING" id="7227.FBpp0072385"/>
<dbReference type="GlyGen" id="O76464">
    <property type="glycosylation" value="2 sites"/>
</dbReference>
<dbReference type="PaxDb" id="7227-FBpp0072385"/>
<dbReference type="DNASU" id="38029"/>
<dbReference type="EnsemblMetazoa" id="FBtr0072483">
    <property type="protein sequence ID" value="FBpp0072385"/>
    <property type="gene ID" value="FBgn0024945"/>
</dbReference>
<dbReference type="GeneID" id="38029"/>
<dbReference type="KEGG" id="dme:Dmel_CG7067"/>
<dbReference type="AGR" id="FB:FBgn0024945"/>
<dbReference type="CTD" id="38029"/>
<dbReference type="FlyBase" id="FBgn0024945">
    <property type="gene designation" value="NitFhit"/>
</dbReference>
<dbReference type="VEuPathDB" id="VectorBase:FBgn0024945"/>
<dbReference type="eggNOG" id="KOG0807">
    <property type="taxonomic scope" value="Eukaryota"/>
</dbReference>
<dbReference type="eggNOG" id="KOG3379">
    <property type="taxonomic scope" value="Eukaryota"/>
</dbReference>
<dbReference type="GeneTree" id="ENSGT00550000075099"/>
<dbReference type="HOGENOM" id="CLU_030130_12_1_1"/>
<dbReference type="InParanoid" id="O76464"/>
<dbReference type="OMA" id="GWHNKKR"/>
<dbReference type="OrthoDB" id="680339at2759"/>
<dbReference type="PhylomeDB" id="O76464"/>
<dbReference type="SignaLink" id="O76464"/>
<dbReference type="BioGRID-ORCS" id="38029">
    <property type="hits" value="0 hits in 3 CRISPR screens"/>
</dbReference>
<dbReference type="GenomeRNAi" id="38029"/>
<dbReference type="PRO" id="PR:O76464"/>
<dbReference type="Proteomes" id="UP000000803">
    <property type="component" value="Chromosome 3L"/>
</dbReference>
<dbReference type="Bgee" id="FBgn0024945">
    <property type="expression patterns" value="Expressed in adult Malpighian tubule (Drosophila) and 67 other cell types or tissues"/>
</dbReference>
<dbReference type="GO" id="GO:0005737">
    <property type="term" value="C:cytoplasm"/>
    <property type="evidence" value="ECO:0000250"/>
    <property type="project" value="FlyBase"/>
</dbReference>
<dbReference type="GO" id="GO:0005739">
    <property type="term" value="C:mitochondrion"/>
    <property type="evidence" value="ECO:0000250"/>
    <property type="project" value="FlyBase"/>
</dbReference>
<dbReference type="GO" id="GO:0047710">
    <property type="term" value="F:bis(5'-adenosyl)-triphosphatase activity"/>
    <property type="evidence" value="ECO:0000314"/>
    <property type="project" value="UniProtKB"/>
</dbReference>
<dbReference type="GO" id="GO:0110050">
    <property type="term" value="F:deaminated glutathione amidase activity"/>
    <property type="evidence" value="ECO:0000250"/>
    <property type="project" value="UniProtKB"/>
</dbReference>
<dbReference type="GO" id="GO:0000166">
    <property type="term" value="F:nucleotide binding"/>
    <property type="evidence" value="ECO:0007669"/>
    <property type="project" value="UniProtKB-KW"/>
</dbReference>
<dbReference type="GO" id="GO:0043605">
    <property type="term" value="P:amide catabolic process"/>
    <property type="evidence" value="ECO:0000250"/>
    <property type="project" value="UniProtKB"/>
</dbReference>
<dbReference type="GO" id="GO:0006139">
    <property type="term" value="P:nucleobase-containing compound metabolic process"/>
    <property type="evidence" value="ECO:0000314"/>
    <property type="project" value="UniProtKB"/>
</dbReference>
<dbReference type="CDD" id="cd01275">
    <property type="entry name" value="FHIT"/>
    <property type="match status" value="1"/>
</dbReference>
<dbReference type="CDD" id="cd07572">
    <property type="entry name" value="nit"/>
    <property type="match status" value="1"/>
</dbReference>
<dbReference type="FunFam" id="3.30.428.10:FF:000011">
    <property type="entry name" value="Fragile histidine triad"/>
    <property type="match status" value="1"/>
</dbReference>
<dbReference type="FunFam" id="3.60.110.10:FF:000005">
    <property type="entry name" value="nitrilase homolog 1 isoform X1"/>
    <property type="match status" value="1"/>
</dbReference>
<dbReference type="Gene3D" id="3.60.110.10">
    <property type="entry name" value="Carbon-nitrogen hydrolase"/>
    <property type="match status" value="1"/>
</dbReference>
<dbReference type="Gene3D" id="3.30.428.10">
    <property type="entry name" value="HIT-like"/>
    <property type="match status" value="1"/>
</dbReference>
<dbReference type="InterPro" id="IPR003010">
    <property type="entry name" value="C-N_Hydrolase"/>
</dbReference>
<dbReference type="InterPro" id="IPR036526">
    <property type="entry name" value="C-N_Hydrolase_sf"/>
</dbReference>
<dbReference type="InterPro" id="IPR039383">
    <property type="entry name" value="FHIT"/>
</dbReference>
<dbReference type="InterPro" id="IPR019808">
    <property type="entry name" value="Histidine_triad_CS"/>
</dbReference>
<dbReference type="InterPro" id="IPR011146">
    <property type="entry name" value="HIT-like"/>
</dbReference>
<dbReference type="InterPro" id="IPR036265">
    <property type="entry name" value="HIT-like_sf"/>
</dbReference>
<dbReference type="InterPro" id="IPR045254">
    <property type="entry name" value="Nit1/2_C-N_Hydrolase"/>
</dbReference>
<dbReference type="PANTHER" id="PTHR23088:SF27">
    <property type="entry name" value="DEAMINATED GLUTATHIONE AMIDASE"/>
    <property type="match status" value="1"/>
</dbReference>
<dbReference type="PANTHER" id="PTHR23088">
    <property type="entry name" value="NITRILASE-RELATED"/>
    <property type="match status" value="1"/>
</dbReference>
<dbReference type="Pfam" id="PF00795">
    <property type="entry name" value="CN_hydrolase"/>
    <property type="match status" value="1"/>
</dbReference>
<dbReference type="Pfam" id="PF01230">
    <property type="entry name" value="HIT"/>
    <property type="match status" value="1"/>
</dbReference>
<dbReference type="SUPFAM" id="SSF56317">
    <property type="entry name" value="Carbon-nitrogen hydrolase"/>
    <property type="match status" value="1"/>
</dbReference>
<dbReference type="SUPFAM" id="SSF54197">
    <property type="entry name" value="HIT-like"/>
    <property type="match status" value="1"/>
</dbReference>
<dbReference type="PROSITE" id="PS50263">
    <property type="entry name" value="CN_HYDROLASE"/>
    <property type="match status" value="1"/>
</dbReference>
<dbReference type="PROSITE" id="PS00892">
    <property type="entry name" value="HIT_1"/>
    <property type="match status" value="1"/>
</dbReference>
<dbReference type="PROSITE" id="PS51084">
    <property type="entry name" value="HIT_2"/>
    <property type="match status" value="1"/>
</dbReference>
<comment type="function">
    <text evidence="8">Cleaves A-5'-PPP-5'A to yield AMP and ADP.</text>
</comment>
<comment type="catalytic activity">
    <reaction evidence="8">
        <text>P(1),P(3)-bis(5'-adenosyl) triphosphate + H2O = AMP + ADP + 2 H(+)</text>
        <dbReference type="Rhea" id="RHEA:13893"/>
        <dbReference type="ChEBI" id="CHEBI:15377"/>
        <dbReference type="ChEBI" id="CHEBI:15378"/>
        <dbReference type="ChEBI" id="CHEBI:58529"/>
        <dbReference type="ChEBI" id="CHEBI:456215"/>
        <dbReference type="ChEBI" id="CHEBI:456216"/>
        <dbReference type="EC" id="3.6.1.29"/>
    </reaction>
</comment>
<comment type="cofactor">
    <cofactor>
        <name>Mn(2+)</name>
        <dbReference type="ChEBI" id="CHEBI:29035"/>
    </cofactor>
</comment>
<comment type="subunit">
    <text evidence="1">Homotetramer.</text>
</comment>
<comment type="developmental stage">
    <text evidence="8">Expressed in embryo and adult.</text>
</comment>
<comment type="similarity">
    <text evidence="3">In the N-terminal section; belongs to the UPF0012 family.</text>
</comment>
<name>NFT1_DROME</name>
<organism>
    <name type="scientific">Drosophila melanogaster</name>
    <name type="common">Fruit fly</name>
    <dbReference type="NCBI Taxonomy" id="7227"/>
    <lineage>
        <taxon>Eukaryota</taxon>
        <taxon>Metazoa</taxon>
        <taxon>Ecdysozoa</taxon>
        <taxon>Arthropoda</taxon>
        <taxon>Hexapoda</taxon>
        <taxon>Insecta</taxon>
        <taxon>Pterygota</taxon>
        <taxon>Neoptera</taxon>
        <taxon>Endopterygota</taxon>
        <taxon>Diptera</taxon>
        <taxon>Brachycera</taxon>
        <taxon>Muscomorpha</taxon>
        <taxon>Ephydroidea</taxon>
        <taxon>Drosophilidae</taxon>
        <taxon>Drosophila</taxon>
        <taxon>Sophophora</taxon>
    </lineage>
</organism>